<keyword id="KW-0001">2Fe-2S</keyword>
<keyword id="KW-0004">4Fe-4S</keyword>
<keyword id="KW-0093">Biotin biosynthesis</keyword>
<keyword id="KW-0408">Iron</keyword>
<keyword id="KW-0411">Iron-sulfur</keyword>
<keyword id="KW-0479">Metal-binding</keyword>
<keyword id="KW-1185">Reference proteome</keyword>
<keyword id="KW-0949">S-adenosyl-L-methionine</keyword>
<keyword id="KW-0808">Transferase</keyword>
<proteinExistence type="inferred from homology"/>
<organism>
    <name type="scientific">Legionella pneumophila subsp. pneumophila (strain Philadelphia 1 / ATCC 33152 / DSM 7513)</name>
    <dbReference type="NCBI Taxonomy" id="272624"/>
    <lineage>
        <taxon>Bacteria</taxon>
        <taxon>Pseudomonadati</taxon>
        <taxon>Pseudomonadota</taxon>
        <taxon>Gammaproteobacteria</taxon>
        <taxon>Legionellales</taxon>
        <taxon>Legionellaceae</taxon>
        <taxon>Legionella</taxon>
    </lineage>
</organism>
<gene>
    <name evidence="1" type="primary">bioB</name>
    <name type="ordered locus">lpg1472</name>
</gene>
<sequence length="315" mass="35177">MSEEKKQWSISDIEAIYQQPFNDLLYQAHTIHRTYHDPNSLQFATLLSIKTGACPEDCGYCSQSGHYKTHVEKEKLMSVEEVLQCAKEAKEGGAKRFCMGAAWRCPPDKAIPQLKEMIEGVKSLGLETCMTLGMLTKEQASHLKEAGLDYYNHNIDTSPSYYDKVVTTRKFSDRLDTLNNVRSAGINVCCGGILGLGETREDRIEFLLTLANMETPPESVPINRLIPVEGTPLAQAERVEGIELVRTIATARILMPKSAIRLTAGRTEMSDELQALCYFAGANSVFIGDKLLTEDNPQRFKDKTLFNKLGLTEMV</sequence>
<dbReference type="EC" id="2.8.1.6" evidence="1"/>
<dbReference type="EMBL" id="AE017354">
    <property type="protein sequence ID" value="AAU27554.1"/>
    <property type="molecule type" value="Genomic_DNA"/>
</dbReference>
<dbReference type="RefSeq" id="WP_010947201.1">
    <property type="nucleotide sequence ID" value="NC_002942.5"/>
</dbReference>
<dbReference type="RefSeq" id="YP_095501.1">
    <property type="nucleotide sequence ID" value="NC_002942.5"/>
</dbReference>
<dbReference type="SMR" id="Q5ZVG8"/>
<dbReference type="STRING" id="272624.lpg1472"/>
<dbReference type="PaxDb" id="272624-lpg1472"/>
<dbReference type="GeneID" id="57035462"/>
<dbReference type="KEGG" id="lpn:lpg1472"/>
<dbReference type="PATRIC" id="fig|272624.6.peg.1545"/>
<dbReference type="eggNOG" id="COG0502">
    <property type="taxonomic scope" value="Bacteria"/>
</dbReference>
<dbReference type="HOGENOM" id="CLU_033172_1_2_6"/>
<dbReference type="OrthoDB" id="9786826at2"/>
<dbReference type="UniPathway" id="UPA00078">
    <property type="reaction ID" value="UER00162"/>
</dbReference>
<dbReference type="Proteomes" id="UP000000609">
    <property type="component" value="Chromosome"/>
</dbReference>
<dbReference type="GO" id="GO:0051537">
    <property type="term" value="F:2 iron, 2 sulfur cluster binding"/>
    <property type="evidence" value="ECO:0007669"/>
    <property type="project" value="UniProtKB-KW"/>
</dbReference>
<dbReference type="GO" id="GO:0051539">
    <property type="term" value="F:4 iron, 4 sulfur cluster binding"/>
    <property type="evidence" value="ECO:0007669"/>
    <property type="project" value="UniProtKB-KW"/>
</dbReference>
<dbReference type="GO" id="GO:0004076">
    <property type="term" value="F:biotin synthase activity"/>
    <property type="evidence" value="ECO:0007669"/>
    <property type="project" value="UniProtKB-UniRule"/>
</dbReference>
<dbReference type="GO" id="GO:0005506">
    <property type="term" value="F:iron ion binding"/>
    <property type="evidence" value="ECO:0007669"/>
    <property type="project" value="UniProtKB-UniRule"/>
</dbReference>
<dbReference type="GO" id="GO:0009102">
    <property type="term" value="P:biotin biosynthetic process"/>
    <property type="evidence" value="ECO:0007669"/>
    <property type="project" value="UniProtKB-UniRule"/>
</dbReference>
<dbReference type="CDD" id="cd01335">
    <property type="entry name" value="Radical_SAM"/>
    <property type="match status" value="1"/>
</dbReference>
<dbReference type="FunFam" id="3.20.20.70:FF:000011">
    <property type="entry name" value="Biotin synthase"/>
    <property type="match status" value="1"/>
</dbReference>
<dbReference type="Gene3D" id="3.20.20.70">
    <property type="entry name" value="Aldolase class I"/>
    <property type="match status" value="1"/>
</dbReference>
<dbReference type="HAMAP" id="MF_01694">
    <property type="entry name" value="BioB"/>
    <property type="match status" value="1"/>
</dbReference>
<dbReference type="InterPro" id="IPR013785">
    <property type="entry name" value="Aldolase_TIM"/>
</dbReference>
<dbReference type="InterPro" id="IPR010722">
    <property type="entry name" value="BATS_dom"/>
</dbReference>
<dbReference type="InterPro" id="IPR002684">
    <property type="entry name" value="Biotin_synth/BioAB"/>
</dbReference>
<dbReference type="InterPro" id="IPR024177">
    <property type="entry name" value="Biotin_synthase"/>
</dbReference>
<dbReference type="InterPro" id="IPR006638">
    <property type="entry name" value="Elp3/MiaA/NifB-like_rSAM"/>
</dbReference>
<dbReference type="InterPro" id="IPR007197">
    <property type="entry name" value="rSAM"/>
</dbReference>
<dbReference type="NCBIfam" id="TIGR00433">
    <property type="entry name" value="bioB"/>
    <property type="match status" value="1"/>
</dbReference>
<dbReference type="PANTHER" id="PTHR22976">
    <property type="entry name" value="BIOTIN SYNTHASE"/>
    <property type="match status" value="1"/>
</dbReference>
<dbReference type="PANTHER" id="PTHR22976:SF2">
    <property type="entry name" value="BIOTIN SYNTHASE, MITOCHONDRIAL"/>
    <property type="match status" value="1"/>
</dbReference>
<dbReference type="Pfam" id="PF06968">
    <property type="entry name" value="BATS"/>
    <property type="match status" value="1"/>
</dbReference>
<dbReference type="Pfam" id="PF04055">
    <property type="entry name" value="Radical_SAM"/>
    <property type="match status" value="1"/>
</dbReference>
<dbReference type="PIRSF" id="PIRSF001619">
    <property type="entry name" value="Biotin_synth"/>
    <property type="match status" value="1"/>
</dbReference>
<dbReference type="SFLD" id="SFLDF00272">
    <property type="entry name" value="biotin_synthase"/>
    <property type="match status" value="1"/>
</dbReference>
<dbReference type="SFLD" id="SFLDG01278">
    <property type="entry name" value="biotin_synthase_like"/>
    <property type="match status" value="1"/>
</dbReference>
<dbReference type="SMART" id="SM00876">
    <property type="entry name" value="BATS"/>
    <property type="match status" value="1"/>
</dbReference>
<dbReference type="SMART" id="SM00729">
    <property type="entry name" value="Elp3"/>
    <property type="match status" value="1"/>
</dbReference>
<dbReference type="SUPFAM" id="SSF102114">
    <property type="entry name" value="Radical SAM enzymes"/>
    <property type="match status" value="1"/>
</dbReference>
<dbReference type="PROSITE" id="PS51918">
    <property type="entry name" value="RADICAL_SAM"/>
    <property type="match status" value="1"/>
</dbReference>
<evidence type="ECO:0000255" key="1">
    <source>
        <dbReference type="HAMAP-Rule" id="MF_01694"/>
    </source>
</evidence>
<evidence type="ECO:0000255" key="2">
    <source>
        <dbReference type="PROSITE-ProRule" id="PRU01266"/>
    </source>
</evidence>
<accession>Q5ZVG8</accession>
<name>BIOB_LEGPH</name>
<comment type="function">
    <text evidence="1">Catalyzes the conversion of dethiobiotin (DTB) to biotin by the insertion of a sulfur atom into dethiobiotin via a radical-based mechanism.</text>
</comment>
<comment type="catalytic activity">
    <reaction evidence="1">
        <text>(4R,5S)-dethiobiotin + (sulfur carrier)-SH + 2 reduced [2Fe-2S]-[ferredoxin] + 2 S-adenosyl-L-methionine = (sulfur carrier)-H + biotin + 2 5'-deoxyadenosine + 2 L-methionine + 2 oxidized [2Fe-2S]-[ferredoxin]</text>
        <dbReference type="Rhea" id="RHEA:22060"/>
        <dbReference type="Rhea" id="RHEA-COMP:10000"/>
        <dbReference type="Rhea" id="RHEA-COMP:10001"/>
        <dbReference type="Rhea" id="RHEA-COMP:14737"/>
        <dbReference type="Rhea" id="RHEA-COMP:14739"/>
        <dbReference type="ChEBI" id="CHEBI:17319"/>
        <dbReference type="ChEBI" id="CHEBI:29917"/>
        <dbReference type="ChEBI" id="CHEBI:33737"/>
        <dbReference type="ChEBI" id="CHEBI:33738"/>
        <dbReference type="ChEBI" id="CHEBI:57586"/>
        <dbReference type="ChEBI" id="CHEBI:57844"/>
        <dbReference type="ChEBI" id="CHEBI:59789"/>
        <dbReference type="ChEBI" id="CHEBI:64428"/>
        <dbReference type="ChEBI" id="CHEBI:149473"/>
        <dbReference type="EC" id="2.8.1.6"/>
    </reaction>
</comment>
<comment type="cofactor">
    <cofactor evidence="1">
        <name>[4Fe-4S] cluster</name>
        <dbReference type="ChEBI" id="CHEBI:49883"/>
    </cofactor>
    <text evidence="1">Binds 1 [4Fe-4S] cluster. The cluster is coordinated with 3 cysteines and an exchangeable S-adenosyl-L-methionine.</text>
</comment>
<comment type="cofactor">
    <cofactor evidence="1">
        <name>[2Fe-2S] cluster</name>
        <dbReference type="ChEBI" id="CHEBI:190135"/>
    </cofactor>
    <text evidence="1">Binds 1 [2Fe-2S] cluster. The cluster is coordinated with 3 cysteines and 1 arginine.</text>
</comment>
<comment type="pathway">
    <text evidence="1">Cofactor biosynthesis; biotin biosynthesis; biotin from 7,8-diaminononanoate: step 2/2.</text>
</comment>
<comment type="subunit">
    <text evidence="1">Homodimer.</text>
</comment>
<comment type="similarity">
    <text evidence="1">Belongs to the radical SAM superfamily. Biotin synthase family.</text>
</comment>
<reference key="1">
    <citation type="journal article" date="2004" name="Science">
        <title>The genomic sequence of the accidental pathogen Legionella pneumophila.</title>
        <authorList>
            <person name="Chien M."/>
            <person name="Morozova I."/>
            <person name="Shi S."/>
            <person name="Sheng H."/>
            <person name="Chen J."/>
            <person name="Gomez S.M."/>
            <person name="Asamani G."/>
            <person name="Hill K."/>
            <person name="Nuara J."/>
            <person name="Feder M."/>
            <person name="Rineer J."/>
            <person name="Greenberg J.J."/>
            <person name="Steshenko V."/>
            <person name="Park S.H."/>
            <person name="Zhao B."/>
            <person name="Teplitskaya E."/>
            <person name="Edwards J.R."/>
            <person name="Pampou S."/>
            <person name="Georghiou A."/>
            <person name="Chou I.-C."/>
            <person name="Iannuccilli W."/>
            <person name="Ulz M.E."/>
            <person name="Kim D.H."/>
            <person name="Geringer-Sameth A."/>
            <person name="Goldsberry C."/>
            <person name="Morozov P."/>
            <person name="Fischer S.G."/>
            <person name="Segal G."/>
            <person name="Qu X."/>
            <person name="Rzhetsky A."/>
            <person name="Zhang P."/>
            <person name="Cayanis E."/>
            <person name="De Jong P.J."/>
            <person name="Ju J."/>
            <person name="Kalachikov S."/>
            <person name="Shuman H.A."/>
            <person name="Russo J.J."/>
        </authorList>
    </citation>
    <scope>NUCLEOTIDE SEQUENCE [LARGE SCALE GENOMIC DNA]</scope>
    <source>
        <strain>Philadelphia 1 / ATCC 33152 / DSM 7513</strain>
    </source>
</reference>
<protein>
    <recommendedName>
        <fullName evidence="1">Biotin synthase</fullName>
        <ecNumber evidence="1">2.8.1.6</ecNumber>
    </recommendedName>
</protein>
<feature type="chain" id="PRO_0000381440" description="Biotin synthase">
    <location>
        <begin position="1"/>
        <end position="315"/>
    </location>
</feature>
<feature type="domain" description="Radical SAM core" evidence="2">
    <location>
        <begin position="39"/>
        <end position="266"/>
    </location>
</feature>
<feature type="binding site" evidence="1">
    <location>
        <position position="54"/>
    </location>
    <ligand>
        <name>[4Fe-4S] cluster</name>
        <dbReference type="ChEBI" id="CHEBI:49883"/>
        <note>4Fe-4S-S-AdoMet</note>
    </ligand>
</feature>
<feature type="binding site" evidence="1">
    <location>
        <position position="58"/>
    </location>
    <ligand>
        <name>[4Fe-4S] cluster</name>
        <dbReference type="ChEBI" id="CHEBI:49883"/>
        <note>4Fe-4S-S-AdoMet</note>
    </ligand>
</feature>
<feature type="binding site" evidence="1">
    <location>
        <position position="61"/>
    </location>
    <ligand>
        <name>[4Fe-4S] cluster</name>
        <dbReference type="ChEBI" id="CHEBI:49883"/>
        <note>4Fe-4S-S-AdoMet</note>
    </ligand>
</feature>
<feature type="binding site" evidence="1">
    <location>
        <position position="98"/>
    </location>
    <ligand>
        <name>[2Fe-2S] cluster</name>
        <dbReference type="ChEBI" id="CHEBI:190135"/>
    </ligand>
</feature>
<feature type="binding site" evidence="1">
    <location>
        <position position="129"/>
    </location>
    <ligand>
        <name>[2Fe-2S] cluster</name>
        <dbReference type="ChEBI" id="CHEBI:190135"/>
    </ligand>
</feature>
<feature type="binding site" evidence="1">
    <location>
        <position position="189"/>
    </location>
    <ligand>
        <name>[2Fe-2S] cluster</name>
        <dbReference type="ChEBI" id="CHEBI:190135"/>
    </ligand>
</feature>
<feature type="binding site" evidence="1">
    <location>
        <position position="261"/>
    </location>
    <ligand>
        <name>[2Fe-2S] cluster</name>
        <dbReference type="ChEBI" id="CHEBI:190135"/>
    </ligand>
</feature>